<accession>B2T736</accession>
<reference key="1">
    <citation type="journal article" date="2011" name="J. Bacteriol.">
        <title>Complete genome sequence of the plant growth-promoting endophyte Burkholderia phytofirmans strain PsJN.</title>
        <authorList>
            <person name="Weilharter A."/>
            <person name="Mitter B."/>
            <person name="Shin M.V."/>
            <person name="Chain P.S."/>
            <person name="Nowak J."/>
            <person name="Sessitsch A."/>
        </authorList>
    </citation>
    <scope>NUCLEOTIDE SEQUENCE [LARGE SCALE GENOMIC DNA]</scope>
    <source>
        <strain>DSM 17436 / LMG 22146 / PsJN</strain>
    </source>
</reference>
<gene>
    <name evidence="1" type="primary">rplF</name>
    <name type="ordered locus">Bphyt_3629</name>
</gene>
<dbReference type="EMBL" id="CP001052">
    <property type="protein sequence ID" value="ACD18019.1"/>
    <property type="molecule type" value="Genomic_DNA"/>
</dbReference>
<dbReference type="RefSeq" id="WP_012434569.1">
    <property type="nucleotide sequence ID" value="NC_010681.1"/>
</dbReference>
<dbReference type="SMR" id="B2T736"/>
<dbReference type="STRING" id="398527.Bphyt_3629"/>
<dbReference type="GeneID" id="97311007"/>
<dbReference type="KEGG" id="bpy:Bphyt_3629"/>
<dbReference type="eggNOG" id="COG0097">
    <property type="taxonomic scope" value="Bacteria"/>
</dbReference>
<dbReference type="HOGENOM" id="CLU_065464_1_2_4"/>
<dbReference type="OrthoDB" id="9805007at2"/>
<dbReference type="Proteomes" id="UP000001739">
    <property type="component" value="Chromosome 1"/>
</dbReference>
<dbReference type="GO" id="GO:0022625">
    <property type="term" value="C:cytosolic large ribosomal subunit"/>
    <property type="evidence" value="ECO:0007669"/>
    <property type="project" value="TreeGrafter"/>
</dbReference>
<dbReference type="GO" id="GO:0019843">
    <property type="term" value="F:rRNA binding"/>
    <property type="evidence" value="ECO:0007669"/>
    <property type="project" value="UniProtKB-UniRule"/>
</dbReference>
<dbReference type="GO" id="GO:0003735">
    <property type="term" value="F:structural constituent of ribosome"/>
    <property type="evidence" value="ECO:0007669"/>
    <property type="project" value="InterPro"/>
</dbReference>
<dbReference type="GO" id="GO:0002181">
    <property type="term" value="P:cytoplasmic translation"/>
    <property type="evidence" value="ECO:0007669"/>
    <property type="project" value="TreeGrafter"/>
</dbReference>
<dbReference type="FunFam" id="3.90.930.12:FF:000001">
    <property type="entry name" value="50S ribosomal protein L6"/>
    <property type="match status" value="1"/>
</dbReference>
<dbReference type="Gene3D" id="3.90.930.12">
    <property type="entry name" value="Ribosomal protein L6, alpha-beta domain"/>
    <property type="match status" value="2"/>
</dbReference>
<dbReference type="HAMAP" id="MF_01365_B">
    <property type="entry name" value="Ribosomal_uL6_B"/>
    <property type="match status" value="1"/>
</dbReference>
<dbReference type="InterPro" id="IPR000702">
    <property type="entry name" value="Ribosomal_uL6-like"/>
</dbReference>
<dbReference type="InterPro" id="IPR036789">
    <property type="entry name" value="Ribosomal_uL6-like_a/b-dom_sf"/>
</dbReference>
<dbReference type="InterPro" id="IPR020040">
    <property type="entry name" value="Ribosomal_uL6_a/b-dom"/>
</dbReference>
<dbReference type="InterPro" id="IPR019906">
    <property type="entry name" value="Ribosomal_uL6_bac-type"/>
</dbReference>
<dbReference type="InterPro" id="IPR002358">
    <property type="entry name" value="Ribosomal_uL6_CS"/>
</dbReference>
<dbReference type="NCBIfam" id="TIGR03654">
    <property type="entry name" value="L6_bact"/>
    <property type="match status" value="1"/>
</dbReference>
<dbReference type="PANTHER" id="PTHR11655">
    <property type="entry name" value="60S/50S RIBOSOMAL PROTEIN L6/L9"/>
    <property type="match status" value="1"/>
</dbReference>
<dbReference type="PANTHER" id="PTHR11655:SF14">
    <property type="entry name" value="LARGE RIBOSOMAL SUBUNIT PROTEIN UL6M"/>
    <property type="match status" value="1"/>
</dbReference>
<dbReference type="Pfam" id="PF00347">
    <property type="entry name" value="Ribosomal_L6"/>
    <property type="match status" value="2"/>
</dbReference>
<dbReference type="PIRSF" id="PIRSF002162">
    <property type="entry name" value="Ribosomal_L6"/>
    <property type="match status" value="1"/>
</dbReference>
<dbReference type="PRINTS" id="PR00059">
    <property type="entry name" value="RIBOSOMALL6"/>
</dbReference>
<dbReference type="SUPFAM" id="SSF56053">
    <property type="entry name" value="Ribosomal protein L6"/>
    <property type="match status" value="2"/>
</dbReference>
<dbReference type="PROSITE" id="PS00525">
    <property type="entry name" value="RIBOSOMAL_L6_1"/>
    <property type="match status" value="1"/>
</dbReference>
<comment type="function">
    <text evidence="1">This protein binds to the 23S rRNA, and is important in its secondary structure. It is located near the subunit interface in the base of the L7/L12 stalk, and near the tRNA binding site of the peptidyltransferase center.</text>
</comment>
<comment type="subunit">
    <text evidence="1">Part of the 50S ribosomal subunit.</text>
</comment>
<comment type="similarity">
    <text evidence="1">Belongs to the universal ribosomal protein uL6 family.</text>
</comment>
<feature type="chain" id="PRO_1000143956" description="Large ribosomal subunit protein uL6">
    <location>
        <begin position="1"/>
        <end position="176"/>
    </location>
</feature>
<keyword id="KW-0687">Ribonucleoprotein</keyword>
<keyword id="KW-0689">Ribosomal protein</keyword>
<keyword id="KW-0694">RNA-binding</keyword>
<keyword id="KW-0699">rRNA-binding</keyword>
<name>RL6_PARPJ</name>
<proteinExistence type="inferred from homology"/>
<organism>
    <name type="scientific">Paraburkholderia phytofirmans (strain DSM 17436 / LMG 22146 / PsJN)</name>
    <name type="common">Burkholderia phytofirmans</name>
    <dbReference type="NCBI Taxonomy" id="398527"/>
    <lineage>
        <taxon>Bacteria</taxon>
        <taxon>Pseudomonadati</taxon>
        <taxon>Pseudomonadota</taxon>
        <taxon>Betaproteobacteria</taxon>
        <taxon>Burkholderiales</taxon>
        <taxon>Burkholderiaceae</taxon>
        <taxon>Paraburkholderia</taxon>
    </lineage>
</organism>
<protein>
    <recommendedName>
        <fullName evidence="1">Large ribosomal subunit protein uL6</fullName>
    </recommendedName>
    <alternativeName>
        <fullName evidence="2">50S ribosomal protein L6</fullName>
    </alternativeName>
</protein>
<sequence length="176" mass="18952">MSRVGKSPVALQGAEVALSDDRITVKGPLGTITQAANRLVKVVNDNGTLNFEPVDESREANAMSGTMRALVANMVNGVTKGFERKLTLVGVGYRAQAQGDKLNLSLGFSHPVVHQMPEGVKAETPTQTEIVIKGINKQQVGQVAAEVRGYRPPEPYKGKGVRYANEVVILKETKKK</sequence>
<evidence type="ECO:0000255" key="1">
    <source>
        <dbReference type="HAMAP-Rule" id="MF_01365"/>
    </source>
</evidence>
<evidence type="ECO:0000305" key="2"/>